<evidence type="ECO:0000256" key="1">
    <source>
        <dbReference type="SAM" id="MobiDB-lite"/>
    </source>
</evidence>
<evidence type="ECO:0000269" key="2">
    <source>
    </source>
</evidence>
<evidence type="ECO:0000269" key="3">
    <source>
    </source>
</evidence>
<evidence type="ECO:0000269" key="4">
    <source>
    </source>
</evidence>
<evidence type="ECO:0000303" key="5">
    <source>
    </source>
</evidence>
<evidence type="ECO:0000305" key="6"/>
<evidence type="ECO:0000312" key="7">
    <source>
        <dbReference type="SGD" id="S000002614"/>
    </source>
</evidence>
<sequence length="884" mass="100000">MEPSNTQKEDLPTAFNGIKSQLNSILKSNQLFQDYALLNGFLAFVHSKLNAAILTSIESQCGKSFAADLDSFDQSSISSILDFSWESVHYPIFKWFQMWRNYILFEKENKKQQTKFIDFRKMNSKMLKFFKTVQNFYVNVINTVYKKYDISVLLPKRIIQDLKLSDIENTTNVGDILAVKTFNSSSPLAHLIPTLFHRCLLFLGTAYRYKTLLEEISNKYSISNFKKSLDFFRLASLVLPSAGETYSQAGAIFLQTGNLGIAVFNFVKGMMTKMPSPVSIKNFGALMVDNKSSLNRSLHTTIMNTYLQESKGPRTPAKEILEFYFLGLFGSVWSPTSWRDDTKPNQLNNGIKLRHLENALYETMSARYLNNIKTIFHNLIITIGGFHLLLKRRSDVSAKTLKDLRSNELDYLNFAFKYIAHILNDIVKESWSENPEVSEILGMVRIINCWIKANPMVLQYSQSNLEFVNALAYLINDIVKKKPSPSFSITEHIPKRTYWFEEDLMVKGLSFVNFQLSDFDDYEKILEMDHSLDRLIGNPPLCDKLSASSEMLLRLQAVVNISSQLLQNNNCGVEWSDNKSRYIFNKKIGFKETVKNSMKTSKQSNEKAKLQRKNKPSTTNGSISMADLERQMRSSSLDSFSPTMGYSGSSVPMAPDTFNVKPSGTITGNKVNVELLKIELSGQNADGAITNISPGYSNAAISSSNSTDESSFDLNNILSSMQQKHAEKSFAKSMQGVNEQIPANDVCHQAQRPMQGGLYSSQQPSSMSSLNSAYQNASMPPSASMVSYPYPFLNQQGQGVFPPYNAQNLQWQSEAYSLKSMNFANPTWLGDQYQTSAPSSAYAQAQRQMFQQPMQQDVGKYMQFPFDAQSNTDSMRGNSRNNMF</sequence>
<organism>
    <name type="scientific">Saccharomyces cerevisiae (strain ATCC 204508 / S288c)</name>
    <name type="common">Baker's yeast</name>
    <dbReference type="NCBI Taxonomy" id="559292"/>
    <lineage>
        <taxon>Eukaryota</taxon>
        <taxon>Fungi</taxon>
        <taxon>Dikarya</taxon>
        <taxon>Ascomycota</taxon>
        <taxon>Saccharomycotina</taxon>
        <taxon>Saccharomycetes</taxon>
        <taxon>Saccharomycetales</taxon>
        <taxon>Saccharomycetaceae</taxon>
        <taxon>Saccharomyces</taxon>
    </lineage>
</organism>
<comment type="function">
    <text evidence="2 3 4">Plays a role in nonsense-mediated mRNA decay (NMD) (PubMed:16467471, PubMed:17984081). Recruits UPF1 to cytoplasmic mRNA decay bodies (P-bodies) (PubMed:17984081). Negative regulator of gene expression. Inhibits translation most likely through effects on eIF-4E (CDC33) (PubMed:16467471). Involved in telomere maintenance (PubMed:10688642).</text>
</comment>
<comment type="subunit">
    <text evidence="3 4">Interacts with NMD helicase UPF1 (PubMed:17984081). Interacts with CDC33 (PubMed:16467471).</text>
</comment>
<comment type="subcellular location">
    <subcellularLocation>
        <location evidence="6">Nucleus</location>
    </subcellularLocation>
    <subcellularLocation>
        <location evidence="6">Chromosome</location>
        <location evidence="6">Telomere</location>
    </subcellularLocation>
    <subcellularLocation>
        <location evidence="4">Cytoplasm</location>
        <location evidence="4">P-body</location>
    </subcellularLocation>
</comment>
<comment type="disruption phenotype">
    <text evidence="4">Results in stabilization of NMD targets.</text>
</comment>
<comment type="similarity">
    <text evidence="6">Belongs to the EST1 family.</text>
</comment>
<gene>
    <name evidence="5" type="primary">EBS1</name>
    <name evidence="7" type="ordered locus">YDR206W</name>
    <name type="ORF">YD8142.03</name>
</gene>
<accession>Q03466</accession>
<accession>D6VSI7</accession>
<feature type="chain" id="PRO_0000086907" description="Nonsense-mediated mRNA decay factor EBS1">
    <location>
        <begin position="1"/>
        <end position="884"/>
    </location>
</feature>
<feature type="region of interest" description="Disordered" evidence="1">
    <location>
        <begin position="596"/>
        <end position="645"/>
    </location>
</feature>
<feature type="region of interest" description="Disordered" evidence="1">
    <location>
        <begin position="755"/>
        <end position="774"/>
    </location>
</feature>
<feature type="compositionally biased region" description="Polar residues" evidence="1">
    <location>
        <begin position="633"/>
        <end position="645"/>
    </location>
</feature>
<feature type="compositionally biased region" description="Low complexity" evidence="1">
    <location>
        <begin position="760"/>
        <end position="772"/>
    </location>
</feature>
<proteinExistence type="evidence at protein level"/>
<reference key="1">
    <citation type="journal article" date="1997" name="Nature">
        <title>The nucleotide sequence of Saccharomyces cerevisiae chromosome IV.</title>
        <authorList>
            <person name="Jacq C."/>
            <person name="Alt-Moerbe J."/>
            <person name="Andre B."/>
            <person name="Arnold W."/>
            <person name="Bahr A."/>
            <person name="Ballesta J.P.G."/>
            <person name="Bargues M."/>
            <person name="Baron L."/>
            <person name="Becker A."/>
            <person name="Biteau N."/>
            <person name="Bloecker H."/>
            <person name="Blugeon C."/>
            <person name="Boskovic J."/>
            <person name="Brandt P."/>
            <person name="Brueckner M."/>
            <person name="Buitrago M.J."/>
            <person name="Coster F."/>
            <person name="Delaveau T."/>
            <person name="del Rey F."/>
            <person name="Dujon B."/>
            <person name="Eide L.G."/>
            <person name="Garcia-Cantalejo J.M."/>
            <person name="Goffeau A."/>
            <person name="Gomez-Peris A."/>
            <person name="Granotier C."/>
            <person name="Hanemann V."/>
            <person name="Hankeln T."/>
            <person name="Hoheisel J.D."/>
            <person name="Jaeger W."/>
            <person name="Jimenez A."/>
            <person name="Jonniaux J.-L."/>
            <person name="Kraemer C."/>
            <person name="Kuester H."/>
            <person name="Laamanen P."/>
            <person name="Legros Y."/>
            <person name="Louis E.J."/>
            <person name="Moeller-Rieker S."/>
            <person name="Monnet A."/>
            <person name="Moro M."/>
            <person name="Mueller-Auer S."/>
            <person name="Nussbaumer B."/>
            <person name="Paricio N."/>
            <person name="Paulin L."/>
            <person name="Perea J."/>
            <person name="Perez-Alonso M."/>
            <person name="Perez-Ortin J.E."/>
            <person name="Pohl T.M."/>
            <person name="Prydz H."/>
            <person name="Purnelle B."/>
            <person name="Rasmussen S.W."/>
            <person name="Remacha M.A."/>
            <person name="Revuelta J.L."/>
            <person name="Rieger M."/>
            <person name="Salom D."/>
            <person name="Saluz H.P."/>
            <person name="Saiz J.E."/>
            <person name="Saren A.-M."/>
            <person name="Schaefer M."/>
            <person name="Scharfe M."/>
            <person name="Schmidt E.R."/>
            <person name="Schneider C."/>
            <person name="Scholler P."/>
            <person name="Schwarz S."/>
            <person name="Soler-Mira A."/>
            <person name="Urrestarazu L.A."/>
            <person name="Verhasselt P."/>
            <person name="Vissers S."/>
            <person name="Voet M."/>
            <person name="Volckaert G."/>
            <person name="Wagner G."/>
            <person name="Wambutt R."/>
            <person name="Wedler E."/>
            <person name="Wedler H."/>
            <person name="Woelfl S."/>
            <person name="Harris D.E."/>
            <person name="Bowman S."/>
            <person name="Brown D."/>
            <person name="Churcher C.M."/>
            <person name="Connor R."/>
            <person name="Dedman K."/>
            <person name="Gentles S."/>
            <person name="Hamlin N."/>
            <person name="Hunt S."/>
            <person name="Jones L."/>
            <person name="McDonald S."/>
            <person name="Murphy L.D."/>
            <person name="Niblett D."/>
            <person name="Odell C."/>
            <person name="Oliver K."/>
            <person name="Rajandream M.A."/>
            <person name="Richards C."/>
            <person name="Shore L."/>
            <person name="Walsh S.V."/>
            <person name="Barrell B.G."/>
            <person name="Dietrich F.S."/>
            <person name="Mulligan J.T."/>
            <person name="Allen E."/>
            <person name="Araujo R."/>
            <person name="Aviles E."/>
            <person name="Berno A."/>
            <person name="Carpenter J."/>
            <person name="Chen E."/>
            <person name="Cherry J.M."/>
            <person name="Chung E."/>
            <person name="Duncan M."/>
            <person name="Hunicke-Smith S."/>
            <person name="Hyman R.W."/>
            <person name="Komp C."/>
            <person name="Lashkari D."/>
            <person name="Lew H."/>
            <person name="Lin D."/>
            <person name="Mosedale D."/>
            <person name="Nakahara K."/>
            <person name="Namath A."/>
            <person name="Oefner P."/>
            <person name="Oh C."/>
            <person name="Petel F.X."/>
            <person name="Roberts D."/>
            <person name="Schramm S."/>
            <person name="Schroeder M."/>
            <person name="Shogren T."/>
            <person name="Shroff N."/>
            <person name="Winant A."/>
            <person name="Yelton M.A."/>
            <person name="Botstein D."/>
            <person name="Davis R.W."/>
            <person name="Johnston M."/>
            <person name="Andrews S."/>
            <person name="Brinkman R."/>
            <person name="Cooper J."/>
            <person name="Ding H."/>
            <person name="Du Z."/>
            <person name="Favello A."/>
            <person name="Fulton L."/>
            <person name="Gattung S."/>
            <person name="Greco T."/>
            <person name="Hallsworth K."/>
            <person name="Hawkins J."/>
            <person name="Hillier L.W."/>
            <person name="Jier M."/>
            <person name="Johnson D."/>
            <person name="Johnston L."/>
            <person name="Kirsten J."/>
            <person name="Kucaba T."/>
            <person name="Langston Y."/>
            <person name="Latreille P."/>
            <person name="Le T."/>
            <person name="Mardis E."/>
            <person name="Menezes S."/>
            <person name="Miller N."/>
            <person name="Nhan M."/>
            <person name="Pauley A."/>
            <person name="Peluso D."/>
            <person name="Rifkin L."/>
            <person name="Riles L."/>
            <person name="Taich A."/>
            <person name="Trevaskis E."/>
            <person name="Vignati D."/>
            <person name="Wilcox L."/>
            <person name="Wohldman P."/>
            <person name="Vaudin M."/>
            <person name="Wilson R."/>
            <person name="Waterston R."/>
            <person name="Albermann K."/>
            <person name="Hani J."/>
            <person name="Heumann K."/>
            <person name="Kleine K."/>
            <person name="Mewes H.-W."/>
            <person name="Zollner A."/>
            <person name="Zaccaria P."/>
        </authorList>
    </citation>
    <scope>NUCLEOTIDE SEQUENCE [LARGE SCALE GENOMIC DNA]</scope>
    <source>
        <strain>ATCC 204508 / S288c</strain>
    </source>
</reference>
<reference key="2">
    <citation type="journal article" date="2014" name="G3 (Bethesda)">
        <title>The reference genome sequence of Saccharomyces cerevisiae: Then and now.</title>
        <authorList>
            <person name="Engel S.R."/>
            <person name="Dietrich F.S."/>
            <person name="Fisk D.G."/>
            <person name="Binkley G."/>
            <person name="Balakrishnan R."/>
            <person name="Costanzo M.C."/>
            <person name="Dwight S.S."/>
            <person name="Hitz B.C."/>
            <person name="Karra K."/>
            <person name="Nash R.S."/>
            <person name="Weng S."/>
            <person name="Wong E.D."/>
            <person name="Lloyd P."/>
            <person name="Skrzypek M.S."/>
            <person name="Miyasato S.R."/>
            <person name="Simison M."/>
            <person name="Cherry J.M."/>
        </authorList>
    </citation>
    <scope>GENOME REANNOTATION</scope>
    <source>
        <strain>ATCC 204508 / S288c</strain>
    </source>
</reference>
<reference key="3">
    <citation type="journal article" date="2000" name="Mol. Cell. Biol.">
        <title>The Est1 subunit of yeast telomerase binds the Tlc1 telomerase RNA.</title>
        <authorList>
            <person name="Zhou J."/>
            <person name="Hidaka K."/>
            <person name="Futcher B."/>
        </authorList>
    </citation>
    <scope>FUNCTION</scope>
</reference>
<reference key="4">
    <citation type="journal article" date="2006" name="Eukaryot. Cell">
        <title>Ebs1p, a negative regulator of gene expression controlled by the Upf proteins in the yeast Saccharomyces cerevisiae.</title>
        <authorList>
            <person name="Ford A.S."/>
            <person name="Guan Q."/>
            <person name="Neeno-Eckwall E."/>
            <person name="Culbertson M.R."/>
        </authorList>
    </citation>
    <scope>FUNCTION</scope>
    <scope>INTERACTION WITH CDC33</scope>
</reference>
<reference key="5">
    <citation type="journal article" date="2007" name="Nucleic Acids Res.">
        <title>Saccharomyces cerevisiae Ebs1p is a putative ortholog of human Smg7 and promotes nonsense-mediated mRNA decay.</title>
        <authorList>
            <person name="Luke B."/>
            <person name="Azzalin C.M."/>
            <person name="Hug N."/>
            <person name="Deplazes A."/>
            <person name="Peter M."/>
            <person name="Lingner J."/>
        </authorList>
    </citation>
    <scope>FUNCTION</scope>
    <scope>INTERACTION WITH UPF1</scope>
    <scope>SUBCELLULAR LOCATION</scope>
    <scope>DISRUPTION PHENOTYPE</scope>
</reference>
<reference key="6">
    <citation type="journal article" date="2018" name="J. Proteome Res.">
        <title>Enrichment-based proteogenomics identifies microproteins, missing proteins, and novel smORFs in Saccharomyces cerevisiae.</title>
        <authorList>
            <person name="He C."/>
            <person name="Jia C."/>
            <person name="Zhang Y."/>
            <person name="Xu P."/>
        </authorList>
    </citation>
    <scope>IDENTIFICATION BY MASS SPECTROMETRY</scope>
</reference>
<protein>
    <recommendedName>
        <fullName evidence="6">Nonsense-mediated mRNA decay factor EBS1</fullName>
    </recommendedName>
    <alternativeName>
        <fullName evidence="5">EST1-like BCY1 suppressor 1</fullName>
    </alternativeName>
</protein>
<name>EBS1_YEAST</name>
<dbReference type="EMBL" id="Z68194">
    <property type="protein sequence ID" value="CAA92345.1"/>
    <property type="molecule type" value="Genomic_DNA"/>
</dbReference>
<dbReference type="EMBL" id="BK006938">
    <property type="protein sequence ID" value="DAA12047.1"/>
    <property type="molecule type" value="Genomic_DNA"/>
</dbReference>
<dbReference type="PIR" id="S61569">
    <property type="entry name" value="S61569"/>
</dbReference>
<dbReference type="RefSeq" id="NP_010492.3">
    <property type="nucleotide sequence ID" value="NM_001180514.3"/>
</dbReference>
<dbReference type="SMR" id="Q03466"/>
<dbReference type="BioGRID" id="32256">
    <property type="interactions" value="109"/>
</dbReference>
<dbReference type="DIP" id="DIP-1297N"/>
<dbReference type="FunCoup" id="Q03466">
    <property type="interactions" value="85"/>
</dbReference>
<dbReference type="IntAct" id="Q03466">
    <property type="interactions" value="15"/>
</dbReference>
<dbReference type="MINT" id="Q03466"/>
<dbReference type="STRING" id="4932.YDR206W"/>
<dbReference type="iPTMnet" id="Q03466"/>
<dbReference type="PaxDb" id="4932-YDR206W"/>
<dbReference type="PeptideAtlas" id="Q03466"/>
<dbReference type="EnsemblFungi" id="YDR206W_mRNA">
    <property type="protein sequence ID" value="YDR206W"/>
    <property type="gene ID" value="YDR206W"/>
</dbReference>
<dbReference type="GeneID" id="851787"/>
<dbReference type="KEGG" id="sce:YDR206W"/>
<dbReference type="AGR" id="SGD:S000002614"/>
<dbReference type="SGD" id="S000002614">
    <property type="gene designation" value="EBS1"/>
</dbReference>
<dbReference type="VEuPathDB" id="FungiDB:YDR206W"/>
<dbReference type="eggNOG" id="KOG2162">
    <property type="taxonomic scope" value="Eukaryota"/>
</dbReference>
<dbReference type="GeneTree" id="ENSGT00940000176623"/>
<dbReference type="HOGENOM" id="CLU_010068_0_0_1"/>
<dbReference type="InParanoid" id="Q03466"/>
<dbReference type="OMA" id="HYPIFKW"/>
<dbReference type="OrthoDB" id="69928at2759"/>
<dbReference type="BioCyc" id="YEAST:G3O-29790-MONOMER"/>
<dbReference type="Reactome" id="R-SCE-975957">
    <property type="pathway name" value="Nonsense Mediated Decay (NMD) enhanced by the Exon Junction Complex (EJC)"/>
</dbReference>
<dbReference type="BioGRID-ORCS" id="851787">
    <property type="hits" value="0 hits in 10 CRISPR screens"/>
</dbReference>
<dbReference type="CD-CODE" id="A777E0F8">
    <property type="entry name" value="P-body"/>
</dbReference>
<dbReference type="PRO" id="PR:Q03466"/>
<dbReference type="Proteomes" id="UP000002311">
    <property type="component" value="Chromosome IV"/>
</dbReference>
<dbReference type="RNAct" id="Q03466">
    <property type="molecule type" value="protein"/>
</dbReference>
<dbReference type="GO" id="GO:0000781">
    <property type="term" value="C:chromosome, telomeric region"/>
    <property type="evidence" value="ECO:0007669"/>
    <property type="project" value="UniProtKB-SubCell"/>
</dbReference>
<dbReference type="GO" id="GO:0005737">
    <property type="term" value="C:cytoplasm"/>
    <property type="evidence" value="ECO:0000314"/>
    <property type="project" value="SGD"/>
</dbReference>
<dbReference type="GO" id="GO:0000932">
    <property type="term" value="C:P-body"/>
    <property type="evidence" value="ECO:0000314"/>
    <property type="project" value="SGD"/>
</dbReference>
<dbReference type="GO" id="GO:0005697">
    <property type="term" value="C:telomerase holoenzyme complex"/>
    <property type="evidence" value="ECO:0000318"/>
    <property type="project" value="GO_Central"/>
</dbReference>
<dbReference type="GO" id="GO:0070034">
    <property type="term" value="F:telomerase RNA binding"/>
    <property type="evidence" value="ECO:0000318"/>
    <property type="project" value="GO_Central"/>
</dbReference>
<dbReference type="GO" id="GO:0042162">
    <property type="term" value="F:telomeric DNA binding"/>
    <property type="evidence" value="ECO:0000318"/>
    <property type="project" value="GO_Central"/>
</dbReference>
<dbReference type="GO" id="GO:0006310">
    <property type="term" value="P:DNA recombination"/>
    <property type="evidence" value="ECO:0000315"/>
    <property type="project" value="SGD"/>
</dbReference>
<dbReference type="GO" id="GO:0017148">
    <property type="term" value="P:negative regulation of translation"/>
    <property type="evidence" value="ECO:0000315"/>
    <property type="project" value="SGD"/>
</dbReference>
<dbReference type="GO" id="GO:0000184">
    <property type="term" value="P:nuclear-transcribed mRNA catabolic process, nonsense-mediated decay"/>
    <property type="evidence" value="ECO:0000315"/>
    <property type="project" value="SGD"/>
</dbReference>
<dbReference type="FunFam" id="1.25.40.10:FF:001117">
    <property type="entry name" value="Est1-like bcy1 suppressor"/>
    <property type="match status" value="1"/>
</dbReference>
<dbReference type="Gene3D" id="1.25.40.10">
    <property type="entry name" value="Tetratricopeptide repeat domain"/>
    <property type="match status" value="1"/>
</dbReference>
<dbReference type="InterPro" id="IPR018834">
    <property type="entry name" value="DNA/RNA-bd_Est1-type"/>
</dbReference>
<dbReference type="InterPro" id="IPR019458">
    <property type="entry name" value="Est1-like_N"/>
</dbReference>
<dbReference type="InterPro" id="IPR045153">
    <property type="entry name" value="Est1/Ebs1-like"/>
</dbReference>
<dbReference type="InterPro" id="IPR011990">
    <property type="entry name" value="TPR-like_helical_dom_sf"/>
</dbReference>
<dbReference type="PANTHER" id="PTHR15696:SF37">
    <property type="entry name" value="NONSENSE-MEDIATED MRNA DECAY FACTOR EBS1-RELATED"/>
    <property type="match status" value="1"/>
</dbReference>
<dbReference type="PANTHER" id="PTHR15696">
    <property type="entry name" value="SMG-7 SUPPRESSOR WITH MORPHOLOGICAL EFFECT ON GENITALIA PROTEIN 7"/>
    <property type="match status" value="1"/>
</dbReference>
<dbReference type="Pfam" id="PF10374">
    <property type="entry name" value="EST1"/>
    <property type="match status" value="1"/>
</dbReference>
<dbReference type="Pfam" id="PF10373">
    <property type="entry name" value="EST1_DNA_bind"/>
    <property type="match status" value="1"/>
</dbReference>
<dbReference type="SUPFAM" id="SSF48452">
    <property type="entry name" value="TPR-like"/>
    <property type="match status" value="1"/>
</dbReference>
<keyword id="KW-0158">Chromosome</keyword>
<keyword id="KW-0963">Cytoplasm</keyword>
<keyword id="KW-0866">Nonsense-mediated mRNA decay</keyword>
<keyword id="KW-0539">Nucleus</keyword>
<keyword id="KW-1185">Reference proteome</keyword>
<keyword id="KW-0779">Telomere</keyword>